<evidence type="ECO:0000250" key="1"/>
<evidence type="ECO:0000250" key="2">
    <source>
        <dbReference type="UniProtKB" id="P00730"/>
    </source>
</evidence>
<evidence type="ECO:0000250" key="3">
    <source>
        <dbReference type="UniProtKB" id="Q96IY4"/>
    </source>
</evidence>
<evidence type="ECO:0000255" key="4"/>
<evidence type="ECO:0000255" key="5">
    <source>
        <dbReference type="PROSITE-ProRule" id="PRU01379"/>
    </source>
</evidence>
<evidence type="ECO:0000269" key="6">
    <source>
    </source>
</evidence>
<evidence type="ECO:0000269" key="7">
    <source>
    </source>
</evidence>
<evidence type="ECO:0000269" key="8">
    <source>
    </source>
</evidence>
<evidence type="ECO:0000269" key="9">
    <source>
    </source>
</evidence>
<evidence type="ECO:0000269" key="10">
    <source ref="3"/>
</evidence>
<evidence type="ECO:0000303" key="11">
    <source>
    </source>
</evidence>
<evidence type="ECO:0000303" key="12">
    <source ref="3"/>
</evidence>
<evidence type="ECO:0000305" key="13"/>
<organism>
    <name type="scientific">Homo sapiens</name>
    <name type="common">Human</name>
    <dbReference type="NCBI Taxonomy" id="9606"/>
    <lineage>
        <taxon>Eukaryota</taxon>
        <taxon>Metazoa</taxon>
        <taxon>Chordata</taxon>
        <taxon>Craniata</taxon>
        <taxon>Vertebrata</taxon>
        <taxon>Euteleostomi</taxon>
        <taxon>Mammalia</taxon>
        <taxon>Eutheria</taxon>
        <taxon>Euarchontoglires</taxon>
        <taxon>Primates</taxon>
        <taxon>Haplorrhini</taxon>
        <taxon>Catarrhini</taxon>
        <taxon>Hominidae</taxon>
        <taxon>Homo</taxon>
    </lineage>
</organism>
<accession>Q8N4T0</accession>
<accession>Q8NEX8</accession>
<accession>Q8TDE8</accession>
<accession>Q9NRI9</accession>
<sequence>MKCLGKRRGQAAAFLPLCWLFLKILQPGHSHLYNNRYAGDKVIRFIPKTEEEAYALKKISYQLKVDLWQPSSISYVSEGTVTDVHIPQNGSRALLAFLQEANIQYKVLIEDLQKTLEKGSSLHTQRNRRSLSGYNYEVYHSLEEIQNWMHHLNKTHSGLIHMFSIGRSYEGRSLFILKLGRRSRLKRAVWIDCGIHAREWIGPAFCQWFVKEALLTYKSDPAMRKMLNHLYFYIMPVFNVDGYHFSWTNDRFWRKTRSRNSRFRCRGVDANRNWKVKWCDEGASMHPCDDTYCGPFPESEPEVKAVANFLRKHRKHIRAYLSFHAYAQMLLYPYSYKYATIPNFRCVESAAYKAVNALQSVYGVRYRYGPASTTLYVSSGSSMDWAYKNGIPYAFAFELRDTGYFGFLLPEMLIKPTCTETMLAVKNITMHLLKKCP</sequence>
<gene>
    <name type="primary">CPA6</name>
    <name type="synonym">CPAH</name>
</gene>
<dbReference type="EC" id="3.4.17.-"/>
<dbReference type="EMBL" id="AF466284">
    <property type="protein sequence ID" value="AAM19307.1"/>
    <property type="molecule type" value="Genomic_DNA"/>
</dbReference>
<dbReference type="EMBL" id="BK000188">
    <property type="protein sequence ID" value="DAA00037.1"/>
    <property type="molecule type" value="mRNA"/>
</dbReference>
<dbReference type="EMBL" id="AY044833">
    <property type="protein sequence ID" value="AAK84941.1"/>
    <property type="status" value="ALT_SEQ"/>
    <property type="molecule type" value="mRNA"/>
</dbReference>
<dbReference type="EMBL" id="AF221594">
    <property type="protein sequence ID" value="AAF91231.1"/>
    <property type="molecule type" value="mRNA"/>
</dbReference>
<dbReference type="EMBL" id="BC033684">
    <property type="protein sequence ID" value="AAH33684.1"/>
    <property type="molecule type" value="mRNA"/>
</dbReference>
<dbReference type="CCDS" id="CCDS6200.1">
    <molecule id="Q8N4T0-1"/>
</dbReference>
<dbReference type="RefSeq" id="NP_065094.3">
    <molecule id="Q8N4T0-1"/>
    <property type="nucleotide sequence ID" value="NM_020361.4"/>
</dbReference>
<dbReference type="SMR" id="Q8N4T0"/>
<dbReference type="BioGRID" id="121362">
    <property type="interactions" value="21"/>
</dbReference>
<dbReference type="FunCoup" id="Q8N4T0">
    <property type="interactions" value="56"/>
</dbReference>
<dbReference type="IntAct" id="Q8N4T0">
    <property type="interactions" value="14"/>
</dbReference>
<dbReference type="STRING" id="9606.ENSP00000297770"/>
<dbReference type="DrugBank" id="DB12668">
    <property type="generic name" value="Metenkefalin"/>
</dbReference>
<dbReference type="MEROPS" id="M14.018"/>
<dbReference type="GlyCosmos" id="Q8N4T0">
    <property type="glycosylation" value="3 sites, No reported glycans"/>
</dbReference>
<dbReference type="GlyGen" id="Q8N4T0">
    <property type="glycosylation" value="4 sites, 1 O-linked glycan (1 site)"/>
</dbReference>
<dbReference type="iPTMnet" id="Q8N4T0"/>
<dbReference type="PhosphoSitePlus" id="Q8N4T0"/>
<dbReference type="BioMuta" id="CPA6"/>
<dbReference type="DMDM" id="85683250"/>
<dbReference type="jPOST" id="Q8N4T0"/>
<dbReference type="MassIVE" id="Q8N4T0"/>
<dbReference type="PaxDb" id="9606-ENSP00000297770"/>
<dbReference type="PeptideAtlas" id="Q8N4T0"/>
<dbReference type="ProteomicsDB" id="71968">
    <molecule id="Q8N4T0-1"/>
</dbReference>
<dbReference type="ProteomicsDB" id="71969">
    <molecule id="Q8N4T0-2"/>
</dbReference>
<dbReference type="ProteomicsDB" id="71970">
    <molecule id="Q8N4T0-3"/>
</dbReference>
<dbReference type="Antibodypedia" id="42507">
    <property type="antibodies" value="168 antibodies from 26 providers"/>
</dbReference>
<dbReference type="DNASU" id="57094"/>
<dbReference type="Ensembl" id="ENST00000297770.10">
    <molecule id="Q8N4T0-1"/>
    <property type="protein sequence ID" value="ENSP00000297770.4"/>
    <property type="gene ID" value="ENSG00000165078.13"/>
</dbReference>
<dbReference type="Ensembl" id="ENST00000479862.6">
    <molecule id="Q8N4T0-3"/>
    <property type="protein sequence ID" value="ENSP00000419016.2"/>
    <property type="gene ID" value="ENSG00000165078.13"/>
</dbReference>
<dbReference type="Ensembl" id="ENST00000638254.1">
    <molecule id="Q8N4T0-3"/>
    <property type="protein sequence ID" value="ENSP00000491129.1"/>
    <property type="gene ID" value="ENSG00000165078.13"/>
</dbReference>
<dbReference type="GeneID" id="57094"/>
<dbReference type="KEGG" id="hsa:57094"/>
<dbReference type="MANE-Select" id="ENST00000297770.10">
    <property type="protein sequence ID" value="ENSP00000297770.4"/>
    <property type="RefSeq nucleotide sequence ID" value="NM_020361.5"/>
    <property type="RefSeq protein sequence ID" value="NP_065094.3"/>
</dbReference>
<dbReference type="UCSC" id="uc003xxq.5">
    <molecule id="Q8N4T0-1"/>
    <property type="organism name" value="human"/>
</dbReference>
<dbReference type="AGR" id="HGNC:17245"/>
<dbReference type="CTD" id="57094"/>
<dbReference type="DisGeNET" id="57094"/>
<dbReference type="GeneCards" id="CPA6"/>
<dbReference type="HGNC" id="HGNC:17245">
    <property type="gene designation" value="CPA6"/>
</dbReference>
<dbReference type="HPA" id="ENSG00000165078">
    <property type="expression patterns" value="Tissue enhanced (intestine, prostate, retina)"/>
</dbReference>
<dbReference type="MalaCards" id="CPA6"/>
<dbReference type="MIM" id="609562">
    <property type="type" value="gene"/>
</dbReference>
<dbReference type="MIM" id="614417">
    <property type="type" value="phenotype"/>
</dbReference>
<dbReference type="MIM" id="614418">
    <property type="type" value="phenotype"/>
</dbReference>
<dbReference type="neXtProt" id="NX_Q8N4T0"/>
<dbReference type="OpenTargets" id="ENSG00000165078"/>
<dbReference type="Orphanet" id="163717">
    <property type="disease" value="Familial mesial temporal lobe epilepsy"/>
</dbReference>
<dbReference type="Orphanet" id="165805">
    <property type="disease" value="Familial mesial temporal lobe epilepsy with febrile seizures"/>
</dbReference>
<dbReference type="PharmGKB" id="PA38444"/>
<dbReference type="VEuPathDB" id="HostDB:ENSG00000165078"/>
<dbReference type="eggNOG" id="KOG2650">
    <property type="taxonomic scope" value="Eukaryota"/>
</dbReference>
<dbReference type="GeneTree" id="ENSGT00940000159307"/>
<dbReference type="HOGENOM" id="CLU_019326_0_3_1"/>
<dbReference type="InParanoid" id="Q8N4T0"/>
<dbReference type="OMA" id="HQHAREH"/>
<dbReference type="OrthoDB" id="3626597at2759"/>
<dbReference type="PAN-GO" id="Q8N4T0">
    <property type="GO annotations" value="3 GO annotations based on evolutionary models"/>
</dbReference>
<dbReference type="PhylomeDB" id="Q8N4T0"/>
<dbReference type="TreeFam" id="TF317197"/>
<dbReference type="PathwayCommons" id="Q8N4T0"/>
<dbReference type="SignaLink" id="Q8N4T0"/>
<dbReference type="BioGRID-ORCS" id="57094">
    <property type="hits" value="16 hits in 1149 CRISPR screens"/>
</dbReference>
<dbReference type="ChiTaRS" id="CPA6">
    <property type="organism name" value="human"/>
</dbReference>
<dbReference type="GeneWiki" id="Carboxypeptidase_A6"/>
<dbReference type="GenomeRNAi" id="57094"/>
<dbReference type="Pharos" id="Q8N4T0">
    <property type="development level" value="Tbio"/>
</dbReference>
<dbReference type="PRO" id="PR:Q8N4T0"/>
<dbReference type="Proteomes" id="UP000005640">
    <property type="component" value="Chromosome 8"/>
</dbReference>
<dbReference type="RNAct" id="Q8N4T0">
    <property type="molecule type" value="protein"/>
</dbReference>
<dbReference type="Bgee" id="ENSG00000165078">
    <property type="expression patterns" value="Expressed in buccal mucosa cell and 80 other cell types or tissues"/>
</dbReference>
<dbReference type="GO" id="GO:0005615">
    <property type="term" value="C:extracellular space"/>
    <property type="evidence" value="ECO:0000318"/>
    <property type="project" value="GO_Central"/>
</dbReference>
<dbReference type="GO" id="GO:0004181">
    <property type="term" value="F:metallocarboxypeptidase activity"/>
    <property type="evidence" value="ECO:0000318"/>
    <property type="project" value="GO_Central"/>
</dbReference>
<dbReference type="GO" id="GO:0008270">
    <property type="term" value="F:zinc ion binding"/>
    <property type="evidence" value="ECO:0007669"/>
    <property type="project" value="InterPro"/>
</dbReference>
<dbReference type="GO" id="GO:0006508">
    <property type="term" value="P:proteolysis"/>
    <property type="evidence" value="ECO:0000318"/>
    <property type="project" value="GO_Central"/>
</dbReference>
<dbReference type="CDD" id="cd03872">
    <property type="entry name" value="M14_CPA6"/>
    <property type="match status" value="1"/>
</dbReference>
<dbReference type="FunFam" id="3.30.70.340:FF:000004">
    <property type="entry name" value="Carboxypeptidase A6"/>
    <property type="match status" value="1"/>
</dbReference>
<dbReference type="FunFam" id="3.40.630.10:FF:000001">
    <property type="entry name" value="Carboxypeptidase B"/>
    <property type="match status" value="1"/>
</dbReference>
<dbReference type="Gene3D" id="3.30.70.340">
    <property type="entry name" value="Metallocarboxypeptidase-like"/>
    <property type="match status" value="1"/>
</dbReference>
<dbReference type="Gene3D" id="3.40.630.10">
    <property type="entry name" value="Zn peptidases"/>
    <property type="match status" value="1"/>
</dbReference>
<dbReference type="InterPro" id="IPR033843">
    <property type="entry name" value="CPAH"/>
</dbReference>
<dbReference type="InterPro" id="IPR036990">
    <property type="entry name" value="M14A-like_propep"/>
</dbReference>
<dbReference type="InterPro" id="IPR003146">
    <property type="entry name" value="M14A_act_pep"/>
</dbReference>
<dbReference type="InterPro" id="IPR000834">
    <property type="entry name" value="Peptidase_M14"/>
</dbReference>
<dbReference type="PANTHER" id="PTHR11705:SF18">
    <property type="entry name" value="CARBOXYPEPTIDASE A6"/>
    <property type="match status" value="1"/>
</dbReference>
<dbReference type="PANTHER" id="PTHR11705">
    <property type="entry name" value="PROTEASE FAMILY M14 CARBOXYPEPTIDASE A,B"/>
    <property type="match status" value="1"/>
</dbReference>
<dbReference type="Pfam" id="PF00246">
    <property type="entry name" value="Peptidase_M14"/>
    <property type="match status" value="1"/>
</dbReference>
<dbReference type="Pfam" id="PF02244">
    <property type="entry name" value="Propep_M14"/>
    <property type="match status" value="1"/>
</dbReference>
<dbReference type="PRINTS" id="PR00765">
    <property type="entry name" value="CRBOXYPTASEA"/>
</dbReference>
<dbReference type="SMART" id="SM00631">
    <property type="entry name" value="Zn_pept"/>
    <property type="match status" value="1"/>
</dbReference>
<dbReference type="SUPFAM" id="SSF54897">
    <property type="entry name" value="Protease propeptides/inhibitors"/>
    <property type="match status" value="1"/>
</dbReference>
<dbReference type="SUPFAM" id="SSF53187">
    <property type="entry name" value="Zn-dependent exopeptidases"/>
    <property type="match status" value="1"/>
</dbReference>
<dbReference type="PROSITE" id="PS00133">
    <property type="entry name" value="CARBOXYPEPT_ZN_2"/>
    <property type="match status" value="1"/>
</dbReference>
<dbReference type="PROSITE" id="PS52035">
    <property type="entry name" value="PEPTIDASE_M14"/>
    <property type="match status" value="1"/>
</dbReference>
<reference key="1">
    <citation type="journal article" date="2002" name="J. Biol. Chem.">
        <title>Identification and characterization of three members of the human metallocarboxypeptidase gene family.</title>
        <authorList>
            <person name="Wei S."/>
            <person name="Segura S."/>
            <person name="Vendrell J."/>
            <person name="Aviles F.X."/>
            <person name="Lanoue E."/>
            <person name="Day R."/>
            <person name="Feng Y."/>
            <person name="Fricker L.D."/>
        </authorList>
    </citation>
    <scope>NUCLEOTIDE SEQUENCE [GENOMIC DNA / MRNA] (ISOFORM 1)</scope>
</reference>
<reference key="2">
    <citation type="journal article" date="2002" name="Invest. Ophthalmol. Vis. Sci.">
        <title>A peptidase gene in chromosome 8q is disrupted by a balanced translocation in a duane syndrome patient.</title>
        <authorList>
            <person name="Pizzuti A."/>
            <person name="Calabrese G."/>
            <person name="Bozzali M."/>
            <person name="Telvi L."/>
            <person name="Morizio E."/>
            <person name="Guida V."/>
            <person name="Gatta V."/>
            <person name="Stuppia L."/>
            <person name="Ion A."/>
            <person name="Palka G."/>
            <person name="Dallapiccola B."/>
        </authorList>
    </citation>
    <scope>NUCLEOTIDE SEQUENCE [MRNA] (ISOFORM 3)</scope>
    <scope>CHROMOSOMAL TRANSLOCATION</scope>
    <source>
        <tissue>Retina</tissue>
    </source>
</reference>
<reference key="3">
    <citation type="submission" date="2000-01" db="EMBL/GenBank/DDBJ databases">
        <title>Novel genes expressed in hematopoietic stem/progenitor cells from myelodysplastic syndrome patients.</title>
        <authorList>
            <person name="Gu J."/>
            <person name="Huang Q."/>
            <person name="Yu Y."/>
            <person name="Xu S."/>
            <person name="Han Z."/>
            <person name="Fu G."/>
            <person name="Chen Z."/>
        </authorList>
    </citation>
    <scope>NUCLEOTIDE SEQUENCE [LARGE SCALE MRNA] (ISOFORM 2)</scope>
    <scope>VARIANT CYS-173</scope>
    <source>
        <tissue>Hematopoietic stem cell</tissue>
    </source>
</reference>
<reference key="4">
    <citation type="journal article" date="2004" name="Genome Res.">
        <title>The status, quality, and expansion of the NIH full-length cDNA project: the Mammalian Gene Collection (MGC).</title>
        <authorList>
            <consortium name="The MGC Project Team"/>
        </authorList>
    </citation>
    <scope>NUCLEOTIDE SEQUENCE [LARGE SCALE MRNA] (ISOFORM 1)</scope>
    <scope>VARIANT CYS-173</scope>
    <source>
        <tissue>Brain</tissue>
    </source>
</reference>
<reference key="5">
    <citation type="journal article" date="2008" name="J. Biol. Chem.">
        <title>Characterization of carboxypeptidase A6, an extracellular matrix peptidase.</title>
        <authorList>
            <person name="Lyons P.J."/>
            <person name="Callaway M.B."/>
            <person name="Fricker L.D."/>
        </authorList>
    </citation>
    <scope>FUNCTION</scope>
    <scope>SUBCELLULAR LOCATION</scope>
    <scope>PROTEOLYTIC PROCESSING</scope>
    <scope>SUBSTRATE SPECIFICITY</scope>
</reference>
<reference key="6">
    <citation type="journal article" date="2010" name="J. Biol. Chem.">
        <title>Substrate specificity of human carboxypeptidase A6.</title>
        <authorList>
            <person name="Lyons P.J."/>
            <person name="Fricker L.D."/>
        </authorList>
    </citation>
    <scope>FUNCTION</scope>
    <scope>CATALYTIC ACTIVITY</scope>
    <scope>SUBSTRATE SPECIFICITY</scope>
    <scope>BIOPHYSICOCHEMICAL PROPERTIES</scope>
</reference>
<reference key="7">
    <citation type="journal article" date="2012" name="Hum. Mutat.">
        <title>Carboxypeptidase A6 gene (CPA6) mutations in a recessive familial form of febrile seizures and temporal lobe epilepsy and in sporadic temporal lobe epilepsy.</title>
        <authorList>
            <person name="Salzmann A."/>
            <person name="Guipponi M."/>
            <person name="Lyons P.J."/>
            <person name="Fricker L.D."/>
            <person name="Sapio M."/>
            <person name="Lambercy C."/>
            <person name="Buresi C."/>
            <person name="Bencheikh B.O."/>
            <person name="Lahjouji F."/>
            <person name="Ouazzani R."/>
            <person name="Crespel A."/>
            <person name="Chaigne D."/>
            <person name="Malafosse A."/>
        </authorList>
    </citation>
    <scope>TISSUE SPECIFICITY</scope>
    <scope>VARIANT ETL5 ARG-267</scope>
    <scope>VARIANT FEB11 VAL-270</scope>
    <scope>CHARACTERIZATION OF VARIANT ETL5 ARG-267</scope>
    <scope>CHARACTERIZATION OF VARIANT FEB11 VAL-270</scope>
</reference>
<protein>
    <recommendedName>
        <fullName>Carboxypeptidase A6</fullName>
        <ecNumber>3.4.17.-</ecNumber>
    </recommendedName>
</protein>
<proteinExistence type="evidence at protein level"/>
<name>CBPA6_HUMAN</name>
<comment type="function">
    <text evidence="7 8">May be involved in the proteolytic inactivation of enkephalins and neurotensin in some brain areas. May convert inactive angiotensin I into the biologically active angiotensin II (PubMed:18178555). Releases a C-terminal amino acid, with preference for large hydrophobic C-terminal amino acids and shows only very weak activity toward small amino acids and histidine (PubMed:20855895).</text>
</comment>
<comment type="cofactor">
    <cofactor evidence="2">
        <name>Zn(2+)</name>
        <dbReference type="ChEBI" id="CHEBI:29105"/>
    </cofactor>
    <text evidence="2">Binds 1 zinc ion per subunit.</text>
</comment>
<comment type="biophysicochemical properties">
    <kinetics>
        <KM evidence="8">266 uM for 3-(2-furyl)acryloyl-Phe-Phe</KM>
        <KM evidence="8">100 uM for 3-(2-furyl)acryloyl-Phe-Tyr</KM>
        <KM evidence="8">386 uM for 3-(2-furyl)acryloyl-Phe-Leu</KM>
        <KM evidence="8">339 uM for 3-(2-furyl)acryloyl-Phe-Trp</KM>
        <KM evidence="8">786 uM for 3-(2-furyl)acryloyl-Phe-Met</KM>
    </kinetics>
    <phDependence>
        <text evidence="8">Optimum pH is 8.</text>
    </phDependence>
</comment>
<comment type="subcellular location">
    <subcellularLocation>
        <location evidence="7">Secreted</location>
        <location evidence="7">Extracellular space</location>
        <location evidence="7">Extracellular matrix</location>
    </subcellularLocation>
</comment>
<comment type="alternative products">
    <event type="alternative splicing"/>
    <isoform>
        <id>Q8N4T0-1</id>
        <name>1</name>
        <sequence type="displayed"/>
    </isoform>
    <isoform>
        <id>Q8N4T0-2</id>
        <name>2</name>
        <sequence type="described" ref="VSP_008808"/>
    </isoform>
    <isoform>
        <id>Q8N4T0-3</id>
        <name>3</name>
        <sequence type="described" ref="VSP_058375 VSP_058376"/>
    </isoform>
</comment>
<comment type="tissue specificity">
    <text evidence="9">Expressed in the hippocampus, nucleus raphe, and cortex.</text>
</comment>
<comment type="disease">
    <text>A chromosomal aberration involving CPA6 was found in a patient with Duane retraction syndrome. Translocation t(6;8)(q26;q13).</text>
</comment>
<comment type="disease" evidence="9">
    <disease id="DI-03336">
        <name>Epilepsy, familial temporal lobe, 5</name>
        <acronym>ETL5</acronym>
        <description>A focal form of epilepsy characterized by recurrent seizures that arise from foci within the temporal lobe. Seizures are usually accompanied by sensory symptoms, most often auditory in nature.</description>
        <dbReference type="MIM" id="614417"/>
    </disease>
    <text>The disease is caused by variants affecting the gene represented in this entry.</text>
</comment>
<comment type="disease" evidence="9">
    <disease id="DI-03335">
        <name>Febrile seizures, familial, 11</name>
        <acronym>FEB11</acronym>
        <description>Seizures associated with febrile episodes in childhood without any evidence of intracranial infection or defined pathologic or traumatic cause. It is a common condition, affecting 2-5% of children aged 3 months to 5 years. The majority are simple febrile seizures (generally defined as generalized onset, single seizures with a duration of less than 30 minutes). Complex febrile seizures are characterized by focal onset, duration greater than 30 minutes, and/or more than one seizure in a 24 hour period. The likelihood of developing epilepsy following simple febrile seizures is low. Complex febrile seizures are associated with a moderately increased incidence of epilepsy.</description>
        <dbReference type="MIM" id="614418"/>
    </disease>
    <text>The disease is caused by variants affecting the gene represented in this entry.</text>
</comment>
<comment type="miscellaneous">
    <molecule>Isoform 2</molecule>
    <text evidence="13">May be due to intron retention.</text>
</comment>
<comment type="miscellaneous">
    <molecule>Isoform 3</molecule>
    <text evidence="13">May be produced at very low levels due to a premature stop codon in the mRNA, leading to nonsense-mediated mRNA decay.</text>
</comment>
<comment type="similarity">
    <text evidence="13">Belongs to the peptidase M14 family.</text>
</comment>
<comment type="sequence caution" evidence="13">
    <conflict type="erroneous translation">
        <sequence resource="EMBL-CDS" id="AAK84941"/>
    </conflict>
    <text>Wrong choice of CDS.</text>
</comment>
<feature type="signal peptide" evidence="4">
    <location>
        <begin position="1"/>
        <end position="30"/>
    </location>
</feature>
<feature type="propeptide" id="PRO_0000004365" description="Activation peptide" evidence="1">
    <location>
        <begin position="31"/>
        <end position="129"/>
    </location>
</feature>
<feature type="chain" id="PRO_0000004366" description="Carboxypeptidase A6">
    <location>
        <begin position="130"/>
        <end position="437"/>
    </location>
</feature>
<feature type="domain" description="Peptidase M14" evidence="5">
    <location>
        <begin position="138"/>
        <end position="432"/>
    </location>
</feature>
<feature type="active site" description="Proton donor/acceptor" evidence="5">
    <location>
        <position position="398"/>
    </location>
</feature>
<feature type="binding site" evidence="2">
    <location>
        <begin position="196"/>
        <end position="199"/>
    </location>
    <ligand>
        <name>substrate</name>
    </ligand>
</feature>
<feature type="binding site" evidence="5">
    <location>
        <position position="196"/>
    </location>
    <ligand>
        <name>Zn(2+)</name>
        <dbReference type="ChEBI" id="CHEBI:29105"/>
        <note>catalytic</note>
    </ligand>
</feature>
<feature type="binding site" evidence="5">
    <location>
        <position position="199"/>
    </location>
    <ligand>
        <name>Zn(2+)</name>
        <dbReference type="ChEBI" id="CHEBI:29105"/>
        <note>catalytic</note>
    </ligand>
</feature>
<feature type="binding site" evidence="2">
    <location>
        <position position="254"/>
    </location>
    <ligand>
        <name>substrate</name>
    </ligand>
</feature>
<feature type="binding site" evidence="2">
    <location>
        <begin position="271"/>
        <end position="272"/>
    </location>
    <ligand>
        <name>substrate</name>
    </ligand>
</feature>
<feature type="binding site" evidence="5">
    <location>
        <position position="324"/>
    </location>
    <ligand>
        <name>Zn(2+)</name>
        <dbReference type="ChEBI" id="CHEBI:29105"/>
        <note>catalytic</note>
    </ligand>
</feature>
<feature type="binding site" evidence="2">
    <location>
        <begin position="325"/>
        <end position="326"/>
    </location>
    <ligand>
        <name>substrate</name>
    </ligand>
</feature>
<feature type="binding site" evidence="2">
    <location>
        <position position="376"/>
    </location>
    <ligand>
        <name>substrate</name>
    </ligand>
</feature>
<feature type="glycosylation site" description="N-linked (GlcNAc...) asparagine" evidence="4">
    <location>
        <position position="89"/>
    </location>
</feature>
<feature type="glycosylation site" description="N-linked (GlcNAc...) asparagine" evidence="4">
    <location>
        <position position="153"/>
    </location>
</feature>
<feature type="glycosylation site" description="N-linked (GlcNAc...) asparagine" evidence="4">
    <location>
        <position position="427"/>
    </location>
</feature>
<feature type="disulfide bond" evidence="3">
    <location>
        <begin position="265"/>
        <end position="288"/>
    </location>
</feature>
<feature type="splice variant" id="VSP_058375" description="In isoform 3." evidence="11">
    <original>VDLWQPSSISYVSEGTVTDVHIPQNGSR</original>
    <variation>GPHRRSSENTGEGKQLAHPEKPKIPLWI</variation>
    <location>
        <begin position="65"/>
        <end position="92"/>
    </location>
</feature>
<feature type="splice variant" id="VSP_058376" description="In isoform 3." evidence="11">
    <location>
        <begin position="93"/>
        <end position="437"/>
    </location>
</feature>
<feature type="splice variant" id="VSP_008808" description="In isoform 2." evidence="12">
    <original>DEGASMHPCDDTYCGPFPESEPEVKAVANFLRKHRKHIRAYLSFHAYAQMLLYPYSYKYATIPNFRCVESAAYKAVNALQSVYGVRYRYGPASTTLYVSSGSSMDWAYKNGIPYAFAFELRDTGYFGFLLPEMLIKPTCTETMLAVKNITMHLLKKCP</original>
    <variation>GKFGTNWDPDPKVSAGFTLQNMSPEDSHGRLMFFCM</variation>
    <location>
        <begin position="280"/>
        <end position="437"/>
    </location>
</feature>
<feature type="sequence variant" id="VAR_024241" description="In dbSNP:rs10957393.">
    <original>F</original>
    <variation>L</variation>
    <location>
        <position position="45"/>
    </location>
</feature>
<feature type="sequence variant" id="VAR_025003" description="In dbSNP:rs17853192." evidence="6 10">
    <original>S</original>
    <variation>C</variation>
    <location>
        <position position="173"/>
    </location>
</feature>
<feature type="sequence variant" id="VAR_048597" description="In dbSNP:rs17343819.">
    <original>N</original>
    <variation>S</variation>
    <location>
        <position position="249"/>
    </location>
</feature>
<feature type="sequence variant" id="VAR_066946" description="In ETL5; affects protein secretion presumably by altering protein folding or stability; dbSNP:rs61738009." evidence="9">
    <original>G</original>
    <variation>R</variation>
    <location>
        <position position="267"/>
    </location>
</feature>
<feature type="sequence variant" id="VAR_066947" description="In FEB11; affects protein secretion presumably by altering protein folding or stability; dbSNP:rs114402678." evidence="9">
    <original>A</original>
    <variation>V</variation>
    <location>
        <position position="270"/>
    </location>
</feature>
<keyword id="KW-0025">Alternative splicing</keyword>
<keyword id="KW-0121">Carboxypeptidase</keyword>
<keyword id="KW-0160">Chromosomal rearrangement</keyword>
<keyword id="KW-0165">Cleavage on pair of basic residues</keyword>
<keyword id="KW-0225">Disease variant</keyword>
<keyword id="KW-1015">Disulfide bond</keyword>
<keyword id="KW-0887">Epilepsy</keyword>
<keyword id="KW-0272">Extracellular matrix</keyword>
<keyword id="KW-0325">Glycoprotein</keyword>
<keyword id="KW-0378">Hydrolase</keyword>
<keyword id="KW-0479">Metal-binding</keyword>
<keyword id="KW-0482">Metalloprotease</keyword>
<keyword id="KW-0645">Protease</keyword>
<keyword id="KW-1267">Proteomics identification</keyword>
<keyword id="KW-1185">Reference proteome</keyword>
<keyword id="KW-0964">Secreted</keyword>
<keyword id="KW-0732">Signal</keyword>
<keyword id="KW-0862">Zinc</keyword>
<keyword id="KW-0865">Zymogen</keyword>